<gene>
    <name type="primary">vpu</name>
</gene>
<organism>
    <name type="scientific">Human immunodeficiency virus type 1 group M subtype B (isolate WMJ22)</name>
    <name type="common">HIV-1</name>
    <dbReference type="NCBI Taxonomy" id="11705"/>
    <lineage>
        <taxon>Viruses</taxon>
        <taxon>Riboviria</taxon>
        <taxon>Pararnavirae</taxon>
        <taxon>Artverviricota</taxon>
        <taxon>Revtraviricetes</taxon>
        <taxon>Ortervirales</taxon>
        <taxon>Retroviridae</taxon>
        <taxon>Orthoretrovirinae</taxon>
        <taxon>Lentivirus</taxon>
        <taxon>Human immunodeficiency virus type 1</taxon>
    </lineage>
</organism>
<evidence type="ECO:0000250" key="1"/>
<evidence type="ECO:0000256" key="2">
    <source>
        <dbReference type="SAM" id="MobiDB-lite"/>
    </source>
</evidence>
<evidence type="ECO:0000305" key="3"/>
<name>VPU_HV1W2</name>
<dbReference type="EMBL" id="AH003669">
    <property type="protein sequence ID" value="AAB12989.1"/>
    <property type="molecule type" value="Genomic_RNA"/>
</dbReference>
<dbReference type="GO" id="GO:0033644">
    <property type="term" value="C:host cell membrane"/>
    <property type="evidence" value="ECO:0007669"/>
    <property type="project" value="UniProtKB-SubCell"/>
</dbReference>
<dbReference type="GO" id="GO:0016020">
    <property type="term" value="C:membrane"/>
    <property type="evidence" value="ECO:0007669"/>
    <property type="project" value="UniProtKB-KW"/>
</dbReference>
<dbReference type="GO" id="GO:0042609">
    <property type="term" value="F:CD4 receptor binding"/>
    <property type="evidence" value="ECO:0007669"/>
    <property type="project" value="InterPro"/>
</dbReference>
<dbReference type="GO" id="GO:0005261">
    <property type="term" value="F:monoatomic cation channel activity"/>
    <property type="evidence" value="ECO:0007669"/>
    <property type="project" value="InterPro"/>
</dbReference>
<dbReference type="GO" id="GO:0032801">
    <property type="term" value="P:receptor catabolic process"/>
    <property type="evidence" value="ECO:0007669"/>
    <property type="project" value="InterPro"/>
</dbReference>
<dbReference type="GO" id="GO:0019076">
    <property type="term" value="P:viral release from host cell"/>
    <property type="evidence" value="ECO:0007669"/>
    <property type="project" value="InterPro"/>
</dbReference>
<dbReference type="Gene3D" id="1.10.195.10">
    <property type="entry name" value="HIV-1 VPU cytoplasmic domain"/>
    <property type="match status" value="1"/>
</dbReference>
<dbReference type="InterPro" id="IPR008187">
    <property type="entry name" value="Vpu"/>
</dbReference>
<dbReference type="InterPro" id="IPR009032">
    <property type="entry name" value="Vpu_cyt_dom_sf"/>
</dbReference>
<dbReference type="Pfam" id="PF00558">
    <property type="entry name" value="Vpu"/>
    <property type="match status" value="1"/>
</dbReference>
<dbReference type="SUPFAM" id="SSF57647">
    <property type="entry name" value="HIV-1 VPU cytoplasmic domain"/>
    <property type="match status" value="1"/>
</dbReference>
<proteinExistence type="inferred from homology"/>
<organismHost>
    <name type="scientific">Homo sapiens</name>
    <name type="common">Human</name>
    <dbReference type="NCBI Taxonomy" id="9606"/>
</organismHost>
<protein>
    <recommendedName>
        <fullName>Protein Vpu</fullName>
    </recommendedName>
    <alternativeName>
        <fullName>U ORF protein</fullName>
    </alternativeName>
    <alternativeName>
        <fullName>Viral protein U</fullName>
    </alternativeName>
</protein>
<sequence>ERAEDSGNESEGDHEELSALVDMGHDALWDVDDL</sequence>
<keyword id="KW-0014">AIDS</keyword>
<keyword id="KW-0053">Apoptosis</keyword>
<keyword id="KW-1043">Host membrane</keyword>
<keyword id="KW-0945">Host-virus interaction</keyword>
<keyword id="KW-0407">Ion channel</keyword>
<keyword id="KW-0406">Ion transport</keyword>
<keyword id="KW-0472">Membrane</keyword>
<keyword id="KW-0597">Phosphoprotein</keyword>
<keyword id="KW-0812">Transmembrane</keyword>
<keyword id="KW-0813">Transport</keyword>
<reference key="1">
    <citation type="journal article" date="1986" name="Science">
        <title>Genetic variation in HTLV-III/LAV over time in patients with AIDS or at risk for AIDS.</title>
        <authorList>
            <person name="Hahn B.H."/>
            <person name="Shaw G.M."/>
            <person name="Taylor M.E."/>
            <person name="Redfield R.R."/>
            <person name="Markham P.D."/>
            <person name="Salahuddin S.Z."/>
            <person name="Wong-Staal F."/>
            <person name="Gallo R.C."/>
            <person name="Parks E.S."/>
            <person name="Parks W.P."/>
        </authorList>
    </citation>
    <scope>NUCLEOTIDE SEQUENCE [GENOMIC RNA]</scope>
</reference>
<accession>P08808</accession>
<comment type="function">
    <text evidence="1">Enhances virion budding, by targeting human CD4 and Tetherin/BST2 to proteasome degradation. Degradation of CD4 prevents any unwanted premature interactions between viral Env and its receptor human CD4 in the endoplasmic reticulum. Degradation of antiretroviral protein Tetherin/BST2 is important for virion budding, as BST2 tethers new viral particles to the host cell membrane. Mechanistically, Vpu bridges either CD4 or BST2 to BTRC, a substrate recognition subunit of the Skp1/Cullin/F-box protein E3 ubiquitin ligase, induces their ubiquitination and subsequent proteasomal degradation. The alteration of the E3 ligase specificity by Vpu seems to interfere with the degradation of host IKBKB, leading to NF-kappa-B down-regulation and subsequent apoptosis. Acts as a viroporin that forms an oligomeric ion channel in membranes. Modulates the host DNA repair mechanisms to promote degradation of nuclear viral cDNA in cells that are already productively infected in order to suppress immune sensing and proviral hyper-integration (superinfection). Manipulates PML-NBs and modulates SUMOylation of host BLM protein thereby enhancing its DNA-end processing activity toward viral unintegrated linear DNA. Also inhibits RAD52-mediated homologous repair of viral cDNA, preventing the generation of dead-end circular forms of single copies of the long terminal repeat and permitting sustained nucleolytic attack.</text>
</comment>
<comment type="activity regulation">
    <text evidence="1">Ion channel activity is inhibited by hexamethylene amiloride in vitro.</text>
</comment>
<comment type="subunit">
    <text evidence="1">Homopentamer. Interacts with host CD4 and BRTC; these interactions induce proteasomal degradation of CD4. Interacts with host BST2; this interaction leads to the degradation of host BST2. Interacts with host FBXW11. Interacts with host AP1M1; this interaction plays a role in the mistrafficking and subsequent degradation of host BST2. Interacts with host RANBP2; this interaction allows Vpu to down-regulate host BLM sumoylation.</text>
</comment>
<comment type="subcellular location">
    <subcellularLocation>
        <location evidence="1">Host membrane</location>
        <topology evidence="1">Single-pass type I membrane protein</topology>
    </subcellularLocation>
</comment>
<comment type="domain">
    <text evidence="1">The N-terminus and transmembrane domains are required for self-oligomerization and proper virion budding, whereas the cytoplasmic domain is required for CD4 degradation. The cytoplasmic domain is composed of 2 amphipathic alpha helix that form a U-shape.</text>
</comment>
<comment type="PTM">
    <text evidence="1">Phosphorylated by host CK2. This phosphorylation is necessary for interaction with human BRCP and degradation of CD4 (By similarity).</text>
</comment>
<comment type="miscellaneous">
    <text>HIV-1 lineages are divided in three main groups, M (for Major), O (for Outlier), and N (for New, or Non-M, Non-O). The vast majority of strains found worldwide belong to the group M. Group O seems to be endemic to and largely confined to Cameroon and neighboring countries in West Central Africa, where these viruses represent a small minority of HIV-1 strains. The group N is represented by a limited number of isolates from Cameroonian persons. The group M is further subdivided in 9 clades or subtypes (A to D, F to H, J and K).</text>
</comment>
<comment type="similarity">
    <text evidence="3">Belongs to the HIV-1 VPU protein family.</text>
</comment>
<feature type="chain" id="PRO_0000085432" description="Protein Vpu">
    <location>
        <begin position="1" status="less than"/>
        <end position="34"/>
    </location>
</feature>
<feature type="region of interest" description="Disordered" evidence="2">
    <location>
        <begin position="1"/>
        <end position="21"/>
    </location>
</feature>
<feature type="compositionally biased region" description="Acidic residues" evidence="2">
    <location>
        <begin position="1"/>
        <end position="14"/>
    </location>
</feature>
<feature type="modified residue" description="Phosphoserine; by host CK2" evidence="1">
    <location>
        <position position="6"/>
    </location>
</feature>
<feature type="modified residue" description="Phosphoserine; by host CK2" evidence="1">
    <location>
        <position position="10"/>
    </location>
</feature>
<feature type="non-terminal residue">
    <location>
        <position position="1"/>
    </location>
</feature>